<dbReference type="EMBL" id="CP001186">
    <property type="protein sequence ID" value="ACK98070.1"/>
    <property type="molecule type" value="Genomic_DNA"/>
</dbReference>
<dbReference type="RefSeq" id="WP_000938443.1">
    <property type="nucleotide sequence ID" value="NC_011772.1"/>
</dbReference>
<dbReference type="SMR" id="B7IPN4"/>
<dbReference type="KEGG" id="bcg:BCG9842_B1857"/>
<dbReference type="HOGENOM" id="CLU_106166_1_1_9"/>
<dbReference type="Proteomes" id="UP000006744">
    <property type="component" value="Chromosome"/>
</dbReference>
<dbReference type="GO" id="GO:0005886">
    <property type="term" value="C:plasma membrane"/>
    <property type="evidence" value="ECO:0007669"/>
    <property type="project" value="UniProtKB-SubCell"/>
</dbReference>
<dbReference type="CDD" id="cd16381">
    <property type="entry name" value="YitT_C_like_1"/>
    <property type="match status" value="1"/>
</dbReference>
<dbReference type="HAMAP" id="MF_01515">
    <property type="entry name" value="UPF0316"/>
    <property type="match status" value="1"/>
</dbReference>
<dbReference type="InterPro" id="IPR019264">
    <property type="entry name" value="DUF2179"/>
</dbReference>
<dbReference type="InterPro" id="IPR044035">
    <property type="entry name" value="DUF5698"/>
</dbReference>
<dbReference type="InterPro" id="IPR022930">
    <property type="entry name" value="UPF0316"/>
</dbReference>
<dbReference type="NCBIfam" id="NF003193">
    <property type="entry name" value="PRK04164.1-4"/>
    <property type="match status" value="1"/>
</dbReference>
<dbReference type="NCBIfam" id="NF003194">
    <property type="entry name" value="PRK04164.1-5"/>
    <property type="match status" value="1"/>
</dbReference>
<dbReference type="PANTHER" id="PTHR40060">
    <property type="entry name" value="UPF0316 PROTEIN YEBE"/>
    <property type="match status" value="1"/>
</dbReference>
<dbReference type="PANTHER" id="PTHR40060:SF1">
    <property type="entry name" value="UPF0316 PROTEIN YEBE"/>
    <property type="match status" value="1"/>
</dbReference>
<dbReference type="Pfam" id="PF10035">
    <property type="entry name" value="DUF2179"/>
    <property type="match status" value="1"/>
</dbReference>
<dbReference type="Pfam" id="PF18955">
    <property type="entry name" value="DUF5698"/>
    <property type="match status" value="1"/>
</dbReference>
<gene>
    <name type="ordered locus">BCG9842_B1857</name>
</gene>
<name>Y1857_BACC2</name>
<feature type="chain" id="PRO_1000198418" description="UPF0316 protein BCG9842_B1857">
    <location>
        <begin position="1"/>
        <end position="182"/>
    </location>
</feature>
<feature type="transmembrane region" description="Helical" evidence="1">
    <location>
        <begin position="6"/>
        <end position="26"/>
    </location>
</feature>
<feature type="transmembrane region" description="Helical" evidence="1">
    <location>
        <begin position="32"/>
        <end position="52"/>
    </location>
</feature>
<feature type="transmembrane region" description="Helical" evidence="1">
    <location>
        <begin position="58"/>
        <end position="78"/>
    </location>
</feature>
<proteinExistence type="inferred from homology"/>
<organism>
    <name type="scientific">Bacillus cereus (strain G9842)</name>
    <dbReference type="NCBI Taxonomy" id="405531"/>
    <lineage>
        <taxon>Bacteria</taxon>
        <taxon>Bacillati</taxon>
        <taxon>Bacillota</taxon>
        <taxon>Bacilli</taxon>
        <taxon>Bacillales</taxon>
        <taxon>Bacillaceae</taxon>
        <taxon>Bacillus</taxon>
        <taxon>Bacillus cereus group</taxon>
    </lineage>
</organism>
<reference key="1">
    <citation type="submission" date="2008-10" db="EMBL/GenBank/DDBJ databases">
        <title>Genome sequence of Bacillus cereus G9842.</title>
        <authorList>
            <person name="Dodson R.J."/>
            <person name="Durkin A.S."/>
            <person name="Rosovitz M.J."/>
            <person name="Rasko D.A."/>
            <person name="Hoffmaster A."/>
            <person name="Ravel J."/>
            <person name="Sutton G."/>
        </authorList>
    </citation>
    <scope>NUCLEOTIDE SEQUENCE [LARGE SCALE GENOMIC DNA]</scope>
    <source>
        <strain>G9842</strain>
    </source>
</reference>
<evidence type="ECO:0000255" key="1">
    <source>
        <dbReference type="HAMAP-Rule" id="MF_01515"/>
    </source>
</evidence>
<sequence length="182" mass="20436">MLQALLIFVLQIIYVPILTIRTILLVKNQTRSAAGVGLLEGAIYIVSLGIVFQDLSNWMNIVAYVIGFSTGLLLGGYIENKLAIGYITYQVSLLDRCNELVDELRHSGFGVTVFEGEGINSIRYRLDIVAKRSREKELLEIINKIAPKAFMSSYEIRSFKGGYLTKAMKKRALMKKKDEHAS</sequence>
<comment type="subcellular location">
    <subcellularLocation>
        <location evidence="1">Cell membrane</location>
        <topology evidence="1">Multi-pass membrane protein</topology>
    </subcellularLocation>
</comment>
<comment type="similarity">
    <text evidence="1">Belongs to the UPF0316 family.</text>
</comment>
<accession>B7IPN4</accession>
<protein>
    <recommendedName>
        <fullName evidence="1">UPF0316 protein BCG9842_B1857</fullName>
    </recommendedName>
</protein>
<keyword id="KW-1003">Cell membrane</keyword>
<keyword id="KW-0472">Membrane</keyword>
<keyword id="KW-0812">Transmembrane</keyword>
<keyword id="KW-1133">Transmembrane helix</keyword>